<reference key="1">
    <citation type="journal article" date="2011" name="J. Bacteriol.">
        <title>Comparative genomics of 28 Salmonella enterica isolates: evidence for CRISPR-mediated adaptive sublineage evolution.</title>
        <authorList>
            <person name="Fricke W.F."/>
            <person name="Mammel M.K."/>
            <person name="McDermott P.F."/>
            <person name="Tartera C."/>
            <person name="White D.G."/>
            <person name="Leclerc J.E."/>
            <person name="Ravel J."/>
            <person name="Cebula T.A."/>
        </authorList>
    </citation>
    <scope>NUCLEOTIDE SEQUENCE [LARGE SCALE GENOMIC DNA]</scope>
    <source>
        <strain>SL483</strain>
    </source>
</reference>
<evidence type="ECO:0000255" key="1">
    <source>
        <dbReference type="HAMAP-Rule" id="MF_00451"/>
    </source>
</evidence>
<protein>
    <recommendedName>
        <fullName evidence="1">Nucleoside diphosphate kinase</fullName>
        <shortName evidence="1">NDK</shortName>
        <shortName evidence="1">NDP kinase</shortName>
        <ecNumber evidence="1">2.7.4.6</ecNumber>
    </recommendedName>
    <alternativeName>
        <fullName evidence="1">Nucleoside-2-P kinase</fullName>
    </alternativeName>
</protein>
<gene>
    <name evidence="1" type="primary">ndk</name>
    <name type="ordered locus">SeAg_B2678</name>
</gene>
<sequence>MAIERTFSIIKPNAVAKNVIGSIFARFEAAGFKIVGTKMLHLTVEQARGFYAEHDGKPFFDGLVEFMTSGPIVVSVLESENAVQRHRDLLGATNPANALAGTLRADYADSLTENGTHGSDSLESAQREIAFFFGEGEVCPRTR</sequence>
<accession>B5F1A1</accession>
<name>NDK_SALA4</name>
<keyword id="KW-0067">ATP-binding</keyword>
<keyword id="KW-0963">Cytoplasm</keyword>
<keyword id="KW-0418">Kinase</keyword>
<keyword id="KW-0460">Magnesium</keyword>
<keyword id="KW-0479">Metal-binding</keyword>
<keyword id="KW-0546">Nucleotide metabolism</keyword>
<keyword id="KW-0547">Nucleotide-binding</keyword>
<keyword id="KW-0597">Phosphoprotein</keyword>
<keyword id="KW-0808">Transferase</keyword>
<dbReference type="EC" id="2.7.4.6" evidence="1"/>
<dbReference type="EMBL" id="CP001138">
    <property type="protein sequence ID" value="ACH50074.1"/>
    <property type="molecule type" value="Genomic_DNA"/>
</dbReference>
<dbReference type="RefSeq" id="WP_000963846.1">
    <property type="nucleotide sequence ID" value="NC_011149.1"/>
</dbReference>
<dbReference type="SMR" id="B5F1A1"/>
<dbReference type="KEGG" id="sea:SeAg_B2678"/>
<dbReference type="HOGENOM" id="CLU_060216_8_1_6"/>
<dbReference type="Proteomes" id="UP000008819">
    <property type="component" value="Chromosome"/>
</dbReference>
<dbReference type="GO" id="GO:0005737">
    <property type="term" value="C:cytoplasm"/>
    <property type="evidence" value="ECO:0007669"/>
    <property type="project" value="UniProtKB-SubCell"/>
</dbReference>
<dbReference type="GO" id="GO:0005524">
    <property type="term" value="F:ATP binding"/>
    <property type="evidence" value="ECO:0007669"/>
    <property type="project" value="UniProtKB-UniRule"/>
</dbReference>
<dbReference type="GO" id="GO:0046872">
    <property type="term" value="F:metal ion binding"/>
    <property type="evidence" value="ECO:0007669"/>
    <property type="project" value="UniProtKB-KW"/>
</dbReference>
<dbReference type="GO" id="GO:0004550">
    <property type="term" value="F:nucleoside diphosphate kinase activity"/>
    <property type="evidence" value="ECO:0007669"/>
    <property type="project" value="UniProtKB-UniRule"/>
</dbReference>
<dbReference type="GO" id="GO:0006241">
    <property type="term" value="P:CTP biosynthetic process"/>
    <property type="evidence" value="ECO:0007669"/>
    <property type="project" value="UniProtKB-UniRule"/>
</dbReference>
<dbReference type="GO" id="GO:0006183">
    <property type="term" value="P:GTP biosynthetic process"/>
    <property type="evidence" value="ECO:0007669"/>
    <property type="project" value="UniProtKB-UniRule"/>
</dbReference>
<dbReference type="GO" id="GO:0006228">
    <property type="term" value="P:UTP biosynthetic process"/>
    <property type="evidence" value="ECO:0007669"/>
    <property type="project" value="UniProtKB-UniRule"/>
</dbReference>
<dbReference type="CDD" id="cd04413">
    <property type="entry name" value="NDPk_I"/>
    <property type="match status" value="1"/>
</dbReference>
<dbReference type="FunFam" id="3.30.70.141:FF:000001">
    <property type="entry name" value="Nucleoside diphosphate kinase"/>
    <property type="match status" value="1"/>
</dbReference>
<dbReference type="Gene3D" id="3.30.70.141">
    <property type="entry name" value="Nucleoside diphosphate kinase-like domain"/>
    <property type="match status" value="1"/>
</dbReference>
<dbReference type="HAMAP" id="MF_00451">
    <property type="entry name" value="NDP_kinase"/>
    <property type="match status" value="1"/>
</dbReference>
<dbReference type="InterPro" id="IPR034907">
    <property type="entry name" value="NDK-like_dom"/>
</dbReference>
<dbReference type="InterPro" id="IPR036850">
    <property type="entry name" value="NDK-like_dom_sf"/>
</dbReference>
<dbReference type="InterPro" id="IPR001564">
    <property type="entry name" value="Nucleoside_diP_kinase"/>
</dbReference>
<dbReference type="InterPro" id="IPR023005">
    <property type="entry name" value="Nucleoside_diP_kinase_AS"/>
</dbReference>
<dbReference type="NCBIfam" id="NF001908">
    <property type="entry name" value="PRK00668.1"/>
    <property type="match status" value="1"/>
</dbReference>
<dbReference type="PANTHER" id="PTHR46161">
    <property type="entry name" value="NUCLEOSIDE DIPHOSPHATE KINASE"/>
    <property type="match status" value="1"/>
</dbReference>
<dbReference type="PANTHER" id="PTHR46161:SF3">
    <property type="entry name" value="NUCLEOSIDE DIPHOSPHATE KINASE DDB_G0292928-RELATED"/>
    <property type="match status" value="1"/>
</dbReference>
<dbReference type="Pfam" id="PF00334">
    <property type="entry name" value="NDK"/>
    <property type="match status" value="1"/>
</dbReference>
<dbReference type="PRINTS" id="PR01243">
    <property type="entry name" value="NUCDPKINASE"/>
</dbReference>
<dbReference type="SMART" id="SM00562">
    <property type="entry name" value="NDK"/>
    <property type="match status" value="1"/>
</dbReference>
<dbReference type="SUPFAM" id="SSF54919">
    <property type="entry name" value="Nucleoside diphosphate kinase, NDK"/>
    <property type="match status" value="1"/>
</dbReference>
<dbReference type="PROSITE" id="PS00469">
    <property type="entry name" value="NDPK"/>
    <property type="match status" value="1"/>
</dbReference>
<dbReference type="PROSITE" id="PS51374">
    <property type="entry name" value="NDPK_LIKE"/>
    <property type="match status" value="1"/>
</dbReference>
<proteinExistence type="inferred from homology"/>
<comment type="function">
    <text evidence="1">Major role in the synthesis of nucleoside triphosphates other than ATP. The ATP gamma phosphate is transferred to the NDP beta phosphate via a ping-pong mechanism, using a phosphorylated active-site intermediate.</text>
</comment>
<comment type="catalytic activity">
    <reaction evidence="1">
        <text>a 2'-deoxyribonucleoside 5'-diphosphate + ATP = a 2'-deoxyribonucleoside 5'-triphosphate + ADP</text>
        <dbReference type="Rhea" id="RHEA:44640"/>
        <dbReference type="ChEBI" id="CHEBI:30616"/>
        <dbReference type="ChEBI" id="CHEBI:61560"/>
        <dbReference type="ChEBI" id="CHEBI:73316"/>
        <dbReference type="ChEBI" id="CHEBI:456216"/>
        <dbReference type="EC" id="2.7.4.6"/>
    </reaction>
</comment>
<comment type="catalytic activity">
    <reaction evidence="1">
        <text>a ribonucleoside 5'-diphosphate + ATP = a ribonucleoside 5'-triphosphate + ADP</text>
        <dbReference type="Rhea" id="RHEA:18113"/>
        <dbReference type="ChEBI" id="CHEBI:30616"/>
        <dbReference type="ChEBI" id="CHEBI:57930"/>
        <dbReference type="ChEBI" id="CHEBI:61557"/>
        <dbReference type="ChEBI" id="CHEBI:456216"/>
        <dbReference type="EC" id="2.7.4.6"/>
    </reaction>
</comment>
<comment type="cofactor">
    <cofactor evidence="1">
        <name>Mg(2+)</name>
        <dbReference type="ChEBI" id="CHEBI:18420"/>
    </cofactor>
</comment>
<comment type="subunit">
    <text evidence="1">Homotetramer.</text>
</comment>
<comment type="subcellular location">
    <subcellularLocation>
        <location evidence="1">Cytoplasm</location>
    </subcellularLocation>
</comment>
<comment type="similarity">
    <text evidence="1">Belongs to the NDK family.</text>
</comment>
<organism>
    <name type="scientific">Salmonella agona (strain SL483)</name>
    <dbReference type="NCBI Taxonomy" id="454166"/>
    <lineage>
        <taxon>Bacteria</taxon>
        <taxon>Pseudomonadati</taxon>
        <taxon>Pseudomonadota</taxon>
        <taxon>Gammaproteobacteria</taxon>
        <taxon>Enterobacterales</taxon>
        <taxon>Enterobacteriaceae</taxon>
        <taxon>Salmonella</taxon>
    </lineage>
</organism>
<feature type="chain" id="PRO_1000125009" description="Nucleoside diphosphate kinase">
    <location>
        <begin position="1"/>
        <end position="143"/>
    </location>
</feature>
<feature type="active site" description="Pros-phosphohistidine intermediate" evidence="1">
    <location>
        <position position="117"/>
    </location>
</feature>
<feature type="binding site" evidence="1">
    <location>
        <position position="11"/>
    </location>
    <ligand>
        <name>ATP</name>
        <dbReference type="ChEBI" id="CHEBI:30616"/>
    </ligand>
</feature>
<feature type="binding site" evidence="1">
    <location>
        <position position="59"/>
    </location>
    <ligand>
        <name>ATP</name>
        <dbReference type="ChEBI" id="CHEBI:30616"/>
    </ligand>
</feature>
<feature type="binding site" evidence="1">
    <location>
        <position position="87"/>
    </location>
    <ligand>
        <name>ATP</name>
        <dbReference type="ChEBI" id="CHEBI:30616"/>
    </ligand>
</feature>
<feature type="binding site" evidence="1">
    <location>
        <position position="93"/>
    </location>
    <ligand>
        <name>ATP</name>
        <dbReference type="ChEBI" id="CHEBI:30616"/>
    </ligand>
</feature>
<feature type="binding site" evidence="1">
    <location>
        <position position="104"/>
    </location>
    <ligand>
        <name>ATP</name>
        <dbReference type="ChEBI" id="CHEBI:30616"/>
    </ligand>
</feature>
<feature type="binding site" evidence="1">
    <location>
        <position position="114"/>
    </location>
    <ligand>
        <name>ATP</name>
        <dbReference type="ChEBI" id="CHEBI:30616"/>
    </ligand>
</feature>